<feature type="chain" id="PRO_1000185488" description="Proline--tRNA ligase">
    <location>
        <begin position="1"/>
        <end position="599"/>
    </location>
</feature>
<name>SYP_BIFA0</name>
<evidence type="ECO:0000255" key="1">
    <source>
        <dbReference type="HAMAP-Rule" id="MF_01569"/>
    </source>
</evidence>
<keyword id="KW-0030">Aminoacyl-tRNA synthetase</keyword>
<keyword id="KW-0067">ATP-binding</keyword>
<keyword id="KW-0963">Cytoplasm</keyword>
<keyword id="KW-0436">Ligase</keyword>
<keyword id="KW-0547">Nucleotide-binding</keyword>
<keyword id="KW-0648">Protein biosynthesis</keyword>
<keyword id="KW-1185">Reference proteome</keyword>
<accession>B8DTM3</accession>
<proteinExistence type="inferred from homology"/>
<organism>
    <name type="scientific">Bifidobacterium animalis subsp. lactis (strain AD011)</name>
    <dbReference type="NCBI Taxonomy" id="442563"/>
    <lineage>
        <taxon>Bacteria</taxon>
        <taxon>Bacillati</taxon>
        <taxon>Actinomycetota</taxon>
        <taxon>Actinomycetes</taxon>
        <taxon>Bifidobacteriales</taxon>
        <taxon>Bifidobacteriaceae</taxon>
        <taxon>Bifidobacterium</taxon>
    </lineage>
</organism>
<sequence length="599" mass="66686">MSTLFLRTLREDPADADVDSAKLLQRAGYIRKAAPGIWTWLPLGLAVLNKIEDVIREEINGIGAQEVHFPALLPREPYEATHRWEEYGDNIFRLKDRHEADYLLAPTHEEMFTLLVKDMYSSYKDLPVTLYQIQTKYRDEFRPRAGLIRGREFIMKDAYSFTVDEEGMRQAYMDERGAYERIFQRLDLKYVPVFAMSGPMGGSASEEFLAPMPIGEDTFALAPSGKAWNVEALHTPAVEAVDCSQTPDATKRATPNARTIDEMIAFANAEYPREDGRDWQASDILKNVVIAVKHAEDDEHDEPWRELVVVGIPGDRTIDMKRLEAQFAPAELEEATEDDLKAHPELVRGYIGPMGFGPQARGDDGTAETLRYLIDAHVAEGSAWFTGADEEGVDYYDLVYGRDFKADDVVEAVQVRDGDMSPDGSGPLSFERGVEIGQVFQLGLKYSEALDLKVLNQNGKTVPVWMGCYGIGVSRVLACIAETHHDDKGLAWPMNIAPAQVHVMATGKDEAAFEAAERLVDELSANGIEVLYDDRRKVSPGVKFKDAELIGVPIIAVAGRDTVNNGTIEVRDRDGSNSENISVDSVAQVIVDRVHEALK</sequence>
<dbReference type="EC" id="6.1.1.15" evidence="1"/>
<dbReference type="EMBL" id="CP001213">
    <property type="protein sequence ID" value="ACL29352.1"/>
    <property type="molecule type" value="Genomic_DNA"/>
</dbReference>
<dbReference type="SMR" id="B8DTM3"/>
<dbReference type="STRING" id="442563.BLA_1064"/>
<dbReference type="KEGG" id="bla:BLA_1064"/>
<dbReference type="PATRIC" id="fig|442563.4.peg.1113"/>
<dbReference type="HOGENOM" id="CLU_016739_2_2_11"/>
<dbReference type="Proteomes" id="UP000002456">
    <property type="component" value="Chromosome"/>
</dbReference>
<dbReference type="GO" id="GO:0005829">
    <property type="term" value="C:cytosol"/>
    <property type="evidence" value="ECO:0007669"/>
    <property type="project" value="TreeGrafter"/>
</dbReference>
<dbReference type="GO" id="GO:0002161">
    <property type="term" value="F:aminoacyl-tRNA deacylase activity"/>
    <property type="evidence" value="ECO:0007669"/>
    <property type="project" value="InterPro"/>
</dbReference>
<dbReference type="GO" id="GO:0005524">
    <property type="term" value="F:ATP binding"/>
    <property type="evidence" value="ECO:0007669"/>
    <property type="project" value="UniProtKB-UniRule"/>
</dbReference>
<dbReference type="GO" id="GO:0004827">
    <property type="term" value="F:proline-tRNA ligase activity"/>
    <property type="evidence" value="ECO:0007669"/>
    <property type="project" value="UniProtKB-UniRule"/>
</dbReference>
<dbReference type="GO" id="GO:0006433">
    <property type="term" value="P:prolyl-tRNA aminoacylation"/>
    <property type="evidence" value="ECO:0007669"/>
    <property type="project" value="UniProtKB-UniRule"/>
</dbReference>
<dbReference type="CDD" id="cd00861">
    <property type="entry name" value="ProRS_anticodon_short"/>
    <property type="match status" value="1"/>
</dbReference>
<dbReference type="Gene3D" id="3.40.50.800">
    <property type="entry name" value="Anticodon-binding domain"/>
    <property type="match status" value="1"/>
</dbReference>
<dbReference type="Gene3D" id="3.30.930.10">
    <property type="entry name" value="Bira Bifunctional Protein, Domain 2"/>
    <property type="match status" value="2"/>
</dbReference>
<dbReference type="HAMAP" id="MF_01569">
    <property type="entry name" value="Pro_tRNA_synth_type1"/>
    <property type="match status" value="1"/>
</dbReference>
<dbReference type="InterPro" id="IPR002314">
    <property type="entry name" value="aa-tRNA-synt_IIb"/>
</dbReference>
<dbReference type="InterPro" id="IPR006195">
    <property type="entry name" value="aa-tRNA-synth_II"/>
</dbReference>
<dbReference type="InterPro" id="IPR045864">
    <property type="entry name" value="aa-tRNA-synth_II/BPL/LPL"/>
</dbReference>
<dbReference type="InterPro" id="IPR004154">
    <property type="entry name" value="Anticodon-bd"/>
</dbReference>
<dbReference type="InterPro" id="IPR036621">
    <property type="entry name" value="Anticodon-bd_dom_sf"/>
</dbReference>
<dbReference type="InterPro" id="IPR002316">
    <property type="entry name" value="Pro-tRNA-ligase_IIa"/>
</dbReference>
<dbReference type="InterPro" id="IPR004500">
    <property type="entry name" value="Pro-tRNA-synth_IIa_bac-type"/>
</dbReference>
<dbReference type="InterPro" id="IPR023717">
    <property type="entry name" value="Pro-tRNA-Synthase_IIa_type1"/>
</dbReference>
<dbReference type="InterPro" id="IPR050062">
    <property type="entry name" value="Pro-tRNA_synthetase"/>
</dbReference>
<dbReference type="InterPro" id="IPR044140">
    <property type="entry name" value="ProRS_anticodon_short"/>
</dbReference>
<dbReference type="InterPro" id="IPR036754">
    <property type="entry name" value="YbaK/aa-tRNA-synt-asso_dom_sf"/>
</dbReference>
<dbReference type="InterPro" id="IPR007214">
    <property type="entry name" value="YbaK/aa-tRNA-synth-assoc-dom"/>
</dbReference>
<dbReference type="NCBIfam" id="NF006625">
    <property type="entry name" value="PRK09194.1"/>
    <property type="match status" value="1"/>
</dbReference>
<dbReference type="NCBIfam" id="TIGR00409">
    <property type="entry name" value="proS_fam_II"/>
    <property type="match status" value="1"/>
</dbReference>
<dbReference type="PANTHER" id="PTHR42753">
    <property type="entry name" value="MITOCHONDRIAL RIBOSOME PROTEIN L39/PROLYL-TRNA LIGASE FAMILY MEMBER"/>
    <property type="match status" value="1"/>
</dbReference>
<dbReference type="PANTHER" id="PTHR42753:SF2">
    <property type="entry name" value="PROLINE--TRNA LIGASE"/>
    <property type="match status" value="1"/>
</dbReference>
<dbReference type="Pfam" id="PF03129">
    <property type="entry name" value="HGTP_anticodon"/>
    <property type="match status" value="1"/>
</dbReference>
<dbReference type="Pfam" id="PF00587">
    <property type="entry name" value="tRNA-synt_2b"/>
    <property type="match status" value="1"/>
</dbReference>
<dbReference type="Pfam" id="PF04073">
    <property type="entry name" value="tRNA_edit"/>
    <property type="match status" value="1"/>
</dbReference>
<dbReference type="PRINTS" id="PR01046">
    <property type="entry name" value="TRNASYNTHPRO"/>
</dbReference>
<dbReference type="SUPFAM" id="SSF52954">
    <property type="entry name" value="Class II aaRS ABD-related"/>
    <property type="match status" value="1"/>
</dbReference>
<dbReference type="SUPFAM" id="SSF55681">
    <property type="entry name" value="Class II aaRS and biotin synthetases"/>
    <property type="match status" value="1"/>
</dbReference>
<dbReference type="SUPFAM" id="SSF55826">
    <property type="entry name" value="YbaK/ProRS associated domain"/>
    <property type="match status" value="1"/>
</dbReference>
<dbReference type="PROSITE" id="PS50862">
    <property type="entry name" value="AA_TRNA_LIGASE_II"/>
    <property type="match status" value="1"/>
</dbReference>
<protein>
    <recommendedName>
        <fullName evidence="1">Proline--tRNA ligase</fullName>
        <ecNumber evidence="1">6.1.1.15</ecNumber>
    </recommendedName>
    <alternativeName>
        <fullName evidence="1">Prolyl-tRNA synthetase</fullName>
        <shortName evidence="1">ProRS</shortName>
    </alternativeName>
</protein>
<reference key="1">
    <citation type="journal article" date="2009" name="J. Bacteriol.">
        <title>Genome sequence of the probiotic bacterium Bifidobacterium animalis subsp. lactis AD011.</title>
        <authorList>
            <person name="Kim J.F."/>
            <person name="Jeong H."/>
            <person name="Yu D.S."/>
            <person name="Choi S.-H."/>
            <person name="Hur C.-G."/>
            <person name="Park M.-S."/>
            <person name="Yoon S.H."/>
            <person name="Kim D.-W."/>
            <person name="Ji G.E."/>
            <person name="Park H.-S."/>
            <person name="Oh T.K."/>
        </authorList>
    </citation>
    <scope>NUCLEOTIDE SEQUENCE [LARGE SCALE GENOMIC DNA]</scope>
    <source>
        <strain>AD011</strain>
    </source>
</reference>
<gene>
    <name evidence="1" type="primary">proS</name>
    <name type="ordered locus">BLA_1064</name>
</gene>
<comment type="function">
    <text evidence="1">Catalyzes the attachment of proline to tRNA(Pro) in a two-step reaction: proline is first activated by ATP to form Pro-AMP and then transferred to the acceptor end of tRNA(Pro). As ProRS can inadvertently accommodate and process non-cognate amino acids such as alanine and cysteine, to avoid such errors it has two additional distinct editing activities against alanine. One activity is designated as 'pretransfer' editing and involves the tRNA(Pro)-independent hydrolysis of activated Ala-AMP. The other activity is designated 'posttransfer' editing and involves deacylation of mischarged Ala-tRNA(Pro). The misacylated Cys-tRNA(Pro) is not edited by ProRS.</text>
</comment>
<comment type="catalytic activity">
    <reaction evidence="1">
        <text>tRNA(Pro) + L-proline + ATP = L-prolyl-tRNA(Pro) + AMP + diphosphate</text>
        <dbReference type="Rhea" id="RHEA:14305"/>
        <dbReference type="Rhea" id="RHEA-COMP:9700"/>
        <dbReference type="Rhea" id="RHEA-COMP:9702"/>
        <dbReference type="ChEBI" id="CHEBI:30616"/>
        <dbReference type="ChEBI" id="CHEBI:33019"/>
        <dbReference type="ChEBI" id="CHEBI:60039"/>
        <dbReference type="ChEBI" id="CHEBI:78442"/>
        <dbReference type="ChEBI" id="CHEBI:78532"/>
        <dbReference type="ChEBI" id="CHEBI:456215"/>
        <dbReference type="EC" id="6.1.1.15"/>
    </reaction>
</comment>
<comment type="subunit">
    <text evidence="1">Homodimer.</text>
</comment>
<comment type="subcellular location">
    <subcellularLocation>
        <location evidence="1">Cytoplasm</location>
    </subcellularLocation>
</comment>
<comment type="domain">
    <text evidence="1">Consists of three domains: the N-terminal catalytic domain, the editing domain and the C-terminal anticodon-binding domain.</text>
</comment>
<comment type="similarity">
    <text evidence="1">Belongs to the class-II aminoacyl-tRNA synthetase family. ProS type 1 subfamily.</text>
</comment>